<reference key="1">
    <citation type="journal article" date="1998" name="DNA Res.">
        <title>Structural analysis of Arabidopsis thaliana chromosome 5. V. Sequence features of the regions of 1,381,565 bp covered by twenty one physically assigned P1 and TAC clones.</title>
        <authorList>
            <person name="Kaneko T."/>
            <person name="Kotani H."/>
            <person name="Nakamura Y."/>
            <person name="Sato S."/>
            <person name="Asamizu E."/>
            <person name="Miyajima N."/>
            <person name="Tabata S."/>
        </authorList>
    </citation>
    <scope>NUCLEOTIDE SEQUENCE [LARGE SCALE GENOMIC DNA]</scope>
    <source>
        <strain>cv. Columbia</strain>
    </source>
</reference>
<reference key="2">
    <citation type="journal article" date="2017" name="Plant J.">
        <title>Araport11: a complete reannotation of the Arabidopsis thaliana reference genome.</title>
        <authorList>
            <person name="Cheng C.Y."/>
            <person name="Krishnakumar V."/>
            <person name="Chan A.P."/>
            <person name="Thibaud-Nissen F."/>
            <person name="Schobel S."/>
            <person name="Town C.D."/>
        </authorList>
    </citation>
    <scope>GENOME REANNOTATION</scope>
    <source>
        <strain>cv. Columbia</strain>
    </source>
</reference>
<proteinExistence type="inferred from homology"/>
<comment type="function">
    <text evidence="2">Liberates mannose from p-nitrophenyl-alpha-D-mannoside in vitro.</text>
</comment>
<comment type="catalytic activity">
    <reaction evidence="2">
        <text>Hydrolysis of terminal, non-reducing alpha-D-mannose residues in alpha-D-mannosides.</text>
        <dbReference type="EC" id="3.2.1.24"/>
    </reaction>
</comment>
<comment type="cofactor">
    <cofactor evidence="3">
        <name>Zn(2+)</name>
        <dbReference type="ChEBI" id="CHEBI:29105"/>
    </cofactor>
    <text evidence="3">Binds 1 zinc ion per subunit.</text>
</comment>
<comment type="subunit">
    <text evidence="3">Homodimer.</text>
</comment>
<comment type="subcellular location">
    <subcellularLocation>
        <location evidence="2">Vacuole</location>
    </subcellularLocation>
</comment>
<comment type="similarity">
    <text evidence="6">Belongs to the glycosyl hydrolase 38 family.</text>
</comment>
<protein>
    <recommendedName>
        <fullName evidence="6">Probable alpha-mannosidase At5g66150</fullName>
        <ecNumber evidence="6">3.2.1.24</ecNumber>
    </recommendedName>
</protein>
<dbReference type="EC" id="3.2.1.24" evidence="6"/>
<dbReference type="EMBL" id="AB011474">
    <property type="protein sequence ID" value="BAB10420.1"/>
    <property type="molecule type" value="Genomic_DNA"/>
</dbReference>
<dbReference type="EMBL" id="CP002688">
    <property type="protein sequence ID" value="AED98165.1"/>
    <property type="molecule type" value="Genomic_DNA"/>
</dbReference>
<dbReference type="RefSeq" id="NP_201416.1">
    <property type="nucleotide sequence ID" value="NM_126013.2"/>
</dbReference>
<dbReference type="SMR" id="Q9FKW9"/>
<dbReference type="FunCoup" id="Q9FKW9">
    <property type="interactions" value="356"/>
</dbReference>
<dbReference type="STRING" id="3702.Q9FKW9"/>
<dbReference type="CAZy" id="GH38">
    <property type="family name" value="Glycoside Hydrolase Family 38"/>
</dbReference>
<dbReference type="GlyGen" id="Q9FKW9">
    <property type="glycosylation" value="12 sites"/>
</dbReference>
<dbReference type="PaxDb" id="3702-AT5G66150.1"/>
<dbReference type="ProteomicsDB" id="250820"/>
<dbReference type="EnsemblPlants" id="AT5G66150.1">
    <property type="protein sequence ID" value="AT5G66150.1"/>
    <property type="gene ID" value="AT5G66150"/>
</dbReference>
<dbReference type="GeneID" id="836747"/>
<dbReference type="Gramene" id="AT5G66150.1">
    <property type="protein sequence ID" value="AT5G66150.1"/>
    <property type="gene ID" value="AT5G66150"/>
</dbReference>
<dbReference type="KEGG" id="ath:AT5G66150"/>
<dbReference type="Araport" id="AT5G66150"/>
<dbReference type="TAIR" id="AT5G66150"/>
<dbReference type="eggNOG" id="KOG1959">
    <property type="taxonomic scope" value="Eukaryota"/>
</dbReference>
<dbReference type="HOGENOM" id="CLU_004690_2_0_1"/>
<dbReference type="InParanoid" id="Q9FKW9"/>
<dbReference type="PhylomeDB" id="Q9FKW9"/>
<dbReference type="BioCyc" id="ARA:AT5G66150-MONOMER"/>
<dbReference type="PRO" id="PR:Q9FKW9"/>
<dbReference type="Proteomes" id="UP000006548">
    <property type="component" value="Chromosome 5"/>
</dbReference>
<dbReference type="ExpressionAtlas" id="Q9FKW9">
    <property type="expression patterns" value="baseline and differential"/>
</dbReference>
<dbReference type="GO" id="GO:0005773">
    <property type="term" value="C:vacuole"/>
    <property type="evidence" value="ECO:0007669"/>
    <property type="project" value="UniProtKB-SubCell"/>
</dbReference>
<dbReference type="GO" id="GO:0004559">
    <property type="term" value="F:alpha-mannosidase activity"/>
    <property type="evidence" value="ECO:0007669"/>
    <property type="project" value="UniProtKB-EC"/>
</dbReference>
<dbReference type="GO" id="GO:0030246">
    <property type="term" value="F:carbohydrate binding"/>
    <property type="evidence" value="ECO:0007669"/>
    <property type="project" value="InterPro"/>
</dbReference>
<dbReference type="GO" id="GO:0046872">
    <property type="term" value="F:metal ion binding"/>
    <property type="evidence" value="ECO:0007669"/>
    <property type="project" value="UniProtKB-KW"/>
</dbReference>
<dbReference type="GO" id="GO:0006013">
    <property type="term" value="P:mannose metabolic process"/>
    <property type="evidence" value="ECO:0007669"/>
    <property type="project" value="InterPro"/>
</dbReference>
<dbReference type="CDD" id="cd10810">
    <property type="entry name" value="GH38N_AMII_LAM_like"/>
    <property type="match status" value="1"/>
</dbReference>
<dbReference type="FunFam" id="1.20.1270.50:FF:000002">
    <property type="entry name" value="Alpha-mannosidase"/>
    <property type="match status" value="1"/>
</dbReference>
<dbReference type="FunFam" id="1.20.1270.50:FF:000003">
    <property type="entry name" value="Alpha-mannosidase"/>
    <property type="match status" value="1"/>
</dbReference>
<dbReference type="FunFam" id="2.60.40.1180:FF:000030">
    <property type="entry name" value="Alpha-mannosidase"/>
    <property type="match status" value="1"/>
</dbReference>
<dbReference type="FunFam" id="2.60.40.1360:FF:000001">
    <property type="entry name" value="Alpha-mannosidase"/>
    <property type="match status" value="1"/>
</dbReference>
<dbReference type="FunFam" id="2.70.98.30:FF:000013">
    <property type="entry name" value="Alpha-mannosidase"/>
    <property type="match status" value="1"/>
</dbReference>
<dbReference type="FunFam" id="3.20.110.10:FF:000001">
    <property type="entry name" value="Alpha-mannosidase"/>
    <property type="match status" value="1"/>
</dbReference>
<dbReference type="Gene3D" id="2.60.40.1360">
    <property type="match status" value="1"/>
</dbReference>
<dbReference type="Gene3D" id="3.20.110.10">
    <property type="entry name" value="Glycoside hydrolase 38, N terminal domain"/>
    <property type="match status" value="1"/>
</dbReference>
<dbReference type="Gene3D" id="1.20.1270.50">
    <property type="entry name" value="Glycoside hydrolase family 38, central domain"/>
    <property type="match status" value="2"/>
</dbReference>
<dbReference type="Gene3D" id="2.60.40.1180">
    <property type="entry name" value="Golgi alpha-mannosidase II"/>
    <property type="match status" value="1"/>
</dbReference>
<dbReference type="Gene3D" id="2.70.98.30">
    <property type="entry name" value="Golgi alpha-mannosidase II, domain 4"/>
    <property type="match status" value="1"/>
</dbReference>
<dbReference type="InterPro" id="IPR011013">
    <property type="entry name" value="Gal_mutarotase_sf_dom"/>
</dbReference>
<dbReference type="InterPro" id="IPR041147">
    <property type="entry name" value="GH38_C"/>
</dbReference>
<dbReference type="InterPro" id="IPR011330">
    <property type="entry name" value="Glyco_hydro/deAcase_b/a-brl"/>
</dbReference>
<dbReference type="InterPro" id="IPR011682">
    <property type="entry name" value="Glyco_hydro_38_C"/>
</dbReference>
<dbReference type="InterPro" id="IPR015341">
    <property type="entry name" value="Glyco_hydro_38_cen"/>
</dbReference>
<dbReference type="InterPro" id="IPR037094">
    <property type="entry name" value="Glyco_hydro_38_cen_sf"/>
</dbReference>
<dbReference type="InterPro" id="IPR000602">
    <property type="entry name" value="Glyco_hydro_38_N"/>
</dbReference>
<dbReference type="InterPro" id="IPR027291">
    <property type="entry name" value="Glyco_hydro_38_N_sf"/>
</dbReference>
<dbReference type="InterPro" id="IPR028995">
    <property type="entry name" value="Glyco_hydro_57/38_cen_sf"/>
</dbReference>
<dbReference type="InterPro" id="IPR013780">
    <property type="entry name" value="Glyco_hydro_b"/>
</dbReference>
<dbReference type="InterPro" id="IPR050843">
    <property type="entry name" value="Glycosyl_Hydrlase_38"/>
</dbReference>
<dbReference type="InterPro" id="IPR048534">
    <property type="entry name" value="Man2a1-like_dom"/>
</dbReference>
<dbReference type="PANTHER" id="PTHR11607">
    <property type="entry name" value="ALPHA-MANNOSIDASE"/>
    <property type="match status" value="1"/>
</dbReference>
<dbReference type="PANTHER" id="PTHR11607:SF61">
    <property type="entry name" value="ALPHA-MANNOSIDASE"/>
    <property type="match status" value="1"/>
</dbReference>
<dbReference type="Pfam" id="PF09261">
    <property type="entry name" value="Alpha-mann_mid"/>
    <property type="match status" value="1"/>
</dbReference>
<dbReference type="Pfam" id="PF17677">
    <property type="entry name" value="Glyco_hydro38C2"/>
    <property type="match status" value="1"/>
</dbReference>
<dbReference type="Pfam" id="PF07748">
    <property type="entry name" value="Glyco_hydro_38C"/>
    <property type="match status" value="1"/>
</dbReference>
<dbReference type="Pfam" id="PF01074">
    <property type="entry name" value="Glyco_hydro_38N"/>
    <property type="match status" value="1"/>
</dbReference>
<dbReference type="Pfam" id="PF21260">
    <property type="entry name" value="Laman-like_dom"/>
    <property type="match status" value="1"/>
</dbReference>
<dbReference type="SMART" id="SM00872">
    <property type="entry name" value="Alpha-mann_mid"/>
    <property type="match status" value="1"/>
</dbReference>
<dbReference type="SUPFAM" id="SSF88688">
    <property type="entry name" value="Families 57/38 glycoside transferase middle domain"/>
    <property type="match status" value="1"/>
</dbReference>
<dbReference type="SUPFAM" id="SSF74650">
    <property type="entry name" value="Galactose mutarotase-like"/>
    <property type="match status" value="1"/>
</dbReference>
<dbReference type="SUPFAM" id="SSF88713">
    <property type="entry name" value="Glycoside hydrolase/deacetylase"/>
    <property type="match status" value="1"/>
</dbReference>
<gene>
    <name evidence="7" type="ordered locus">At5g66150</name>
    <name evidence="8" type="ORF">K2A18.23</name>
</gene>
<accession>Q9FKW9</accession>
<sequence length="1047" mass="118008">MEKPGMSLLKGSLCVIVFLLLLSLVESVKGGGYVKYGTEAKVVPGKLNVHLVPHSHDDVGWLKTVDQYYVGSNNRIQNACVRNVLDSVVDSLLRDPNRKFVFAEMAFFTRWWEEQSPERQEQVRRLVKSGQLEFVNGGWAMNDEATCHYIDMIDQTTKGHRFIKQQFNTTPRAAWQIDPFGHSSVQAYLLGAELGLDSVHFARIDYQDREKRKAEKSLEVIWRGSKTLDSSSQIFTNIFFVHYGPPTGFHYEVTDDYVPLQDNPRFDGYNIKEAVNDFVNASLVYANVSRGNHVMWTMGDDFQYQFAESWFRQMDRLIHYVNKDGRVNALYSTPSLYVDAKNVANVTWPLKTHDFFPYADRAYAYWTGYFTSRPALKRYVRALSGYYMAARQLEFLVGKNSGGPNTYSLGDALGIAQHHDAVTGTAKQHVTNDYMKRLALGASEAEAVVNSALACLMNKAPKGGCTKPAIAFSQQCSLMNISYCPSTEETLPGQKSLILVAYNSLGWNRTEIIRIPVNDAGLSVEDSSGNTLDAQYIPMDNVTSNLRSFYTKAYLGISSLQRPKYWLVFKAKVPPLGWNTFFISKASAQGSNNHKHSSVMLSPMNNTTEIGPGNLKMVFSSDSGRLERMYNSRTGADIKVDQNYFWYASNVGDAKDPQVSGAYIFRPNGSLAYPVSSSKICTVTSAFIGNGNVQSKLQIVRGPLIDEVHQQFSPWVAQVVRLYKEKEHAEFEFTIGPISVGKGHLTGKEIITRMVTDMTTAKEFYTDSNGRDFLKRVRDNRTDWHLEVNEPIAGNYYPLNLGMYIKDEKAELSVLVDRATGGASIKDGEIELMLHRRTSMDDSRGVEESLVETVCVNDTCAGLTIRGNYYVSINKVGEGGRWRRETGQEIYSPLLMAFAHENKEKWKASNTVKGYAMDHLYTLPQNIALITLEELDLGNVLLRLAHLYEAGEDSDYSKIAKVELKKLFSGKMIKEVTEMSLSANQEKVKMKEKMKWKVEGEAEQPSSPLRGGPVDKSTLVVELGPMEIRTFVVQFYQKQRRRKLFVG</sequence>
<organism>
    <name type="scientific">Arabidopsis thaliana</name>
    <name type="common">Mouse-ear cress</name>
    <dbReference type="NCBI Taxonomy" id="3702"/>
    <lineage>
        <taxon>Eukaryota</taxon>
        <taxon>Viridiplantae</taxon>
        <taxon>Streptophyta</taxon>
        <taxon>Embryophyta</taxon>
        <taxon>Tracheophyta</taxon>
        <taxon>Spermatophyta</taxon>
        <taxon>Magnoliopsida</taxon>
        <taxon>eudicotyledons</taxon>
        <taxon>Gunneridae</taxon>
        <taxon>Pentapetalae</taxon>
        <taxon>rosids</taxon>
        <taxon>malvids</taxon>
        <taxon>Brassicales</taxon>
        <taxon>Brassicaceae</taxon>
        <taxon>Camelineae</taxon>
        <taxon>Arabidopsis</taxon>
    </lineage>
</organism>
<keyword id="KW-1015">Disulfide bond</keyword>
<keyword id="KW-0325">Glycoprotein</keyword>
<keyword id="KW-0326">Glycosidase</keyword>
<keyword id="KW-0378">Hydrolase</keyword>
<keyword id="KW-0479">Metal-binding</keyword>
<keyword id="KW-1185">Reference proteome</keyword>
<keyword id="KW-0732">Signal</keyword>
<keyword id="KW-0926">Vacuole</keyword>
<keyword id="KW-0862">Zinc</keyword>
<name>MANA3_ARATH</name>
<feature type="signal peptide" evidence="4">
    <location>
        <begin position="1"/>
        <end position="27"/>
    </location>
</feature>
<feature type="chain" id="PRO_5006751720" description="Probable alpha-mannosidase At5g66150" evidence="4">
    <location>
        <begin position="28"/>
        <end position="1047"/>
    </location>
</feature>
<feature type="binding site" evidence="3">
    <location>
        <position position="56"/>
    </location>
    <ligand>
        <name>Zn(2+)</name>
        <dbReference type="ChEBI" id="CHEBI:29105"/>
    </ligand>
</feature>
<feature type="binding site" evidence="3">
    <location>
        <position position="58"/>
    </location>
    <ligand>
        <name>Zn(2+)</name>
        <dbReference type="ChEBI" id="CHEBI:29105"/>
    </ligand>
</feature>
<feature type="binding site" evidence="3">
    <location>
        <position position="178"/>
    </location>
    <ligand>
        <name>Zn(2+)</name>
        <dbReference type="ChEBI" id="CHEBI:29105"/>
    </ligand>
</feature>
<feature type="binding site" evidence="3">
    <location>
        <position position="419"/>
    </location>
    <ligand>
        <name>Zn(2+)</name>
        <dbReference type="ChEBI" id="CHEBI:29105"/>
    </ligand>
</feature>
<feature type="glycosylation site" description="N-linked (GlcNAc...) asparagine" evidence="5">
    <location>
        <position position="280"/>
    </location>
</feature>
<feature type="glycosylation site" description="N-linked (GlcNAc...) asparagine" evidence="5">
    <location>
        <position position="287"/>
    </location>
</feature>
<feature type="glycosylation site" description="N-linked (GlcNAc...) asparagine" evidence="5">
    <location>
        <position position="345"/>
    </location>
</feature>
<feature type="glycosylation site" description="N-linked (GlcNAc...) asparagine" evidence="5">
    <location>
        <position position="480"/>
    </location>
</feature>
<feature type="glycosylation site" description="N-linked (GlcNAc...) asparagine" evidence="5">
    <location>
        <position position="508"/>
    </location>
</feature>
<feature type="glycosylation site" description="N-linked (GlcNAc...) asparagine" evidence="5">
    <location>
        <position position="541"/>
    </location>
</feature>
<feature type="glycosylation site" description="N-linked (GlcNAc...) asparagine" evidence="5">
    <location>
        <position position="605"/>
    </location>
</feature>
<feature type="glycosylation site" description="N-linked (GlcNAc...) asparagine" evidence="5">
    <location>
        <position position="606"/>
    </location>
</feature>
<feature type="glycosylation site" description="N-linked (GlcNAc...) asparagine" evidence="5">
    <location>
        <position position="668"/>
    </location>
</feature>
<feature type="glycosylation site" description="N-linked (GlcNAc...) asparagine" evidence="5">
    <location>
        <position position="780"/>
    </location>
</feature>
<feature type="glycosylation site" description="N-linked (GlcNAc...) asparagine" evidence="5">
    <location>
        <position position="857"/>
    </location>
</feature>
<feature type="disulfide bond" evidence="1">
    <location>
        <begin position="455"/>
        <end position="465"/>
    </location>
</feature>
<feature type="disulfide bond" evidence="1">
    <location>
        <begin position="476"/>
        <end position="484"/>
    </location>
</feature>
<feature type="disulfide bond" evidence="1">
    <location>
        <begin position="855"/>
        <end position="860"/>
    </location>
</feature>
<evidence type="ECO:0000250" key="1">
    <source>
        <dbReference type="UniProtKB" id="C0HJB3"/>
    </source>
</evidence>
<evidence type="ECO:0000250" key="2">
    <source>
        <dbReference type="UniProtKB" id="P94078"/>
    </source>
</evidence>
<evidence type="ECO:0000250" key="3">
    <source>
        <dbReference type="UniProtKB" id="Q29451"/>
    </source>
</evidence>
<evidence type="ECO:0000255" key="4"/>
<evidence type="ECO:0000255" key="5">
    <source>
        <dbReference type="PROSITE-ProRule" id="PRU00498"/>
    </source>
</evidence>
<evidence type="ECO:0000305" key="6"/>
<evidence type="ECO:0000312" key="7">
    <source>
        <dbReference type="Araport" id="AT5G66150"/>
    </source>
</evidence>
<evidence type="ECO:0000312" key="8">
    <source>
        <dbReference type="EMBL" id="BAB10420.1"/>
    </source>
</evidence>